<comment type="function">
    <text evidence="8">Metalloprotease which may be important for placentation by regulating biological activity of key peptides at the embryo-maternal interface. On synthetic substrates it shows a marked preference for Leu-4-methylcoumaryl-7-amide (Leu-MCA) over Met-MCA, Arg-LCA and Lys-LCA. Cleaves the N-terminal amino acid of several peptides such as angiotensin-3, kisspeptin-10 and endokinin C.</text>
</comment>
<comment type="cofactor">
    <cofactor evidence="1">
        <name>Zn(2+)</name>
        <dbReference type="ChEBI" id="CHEBI:29105"/>
    </cofactor>
    <text evidence="1">Binds 1 zinc ion per subunit.</text>
</comment>
<comment type="activity regulation">
    <text evidence="8">Inhibited by bestatin.</text>
</comment>
<comment type="biophysicochemical properties">
    <kinetics>
        <KM evidence="8">78.2 uM for Leu-4-methylcoumaryl-7-amide</KM>
    </kinetics>
    <phDependence>
        <text evidence="8">Optimum pH is 7.0.</text>
    </phDependence>
</comment>
<comment type="subunit">
    <text evidence="8">Homodimer.</text>
</comment>
<comment type="interaction">
    <interactant intactId="EBI-25862057">
        <id>Q6Q4G3-4</id>
    </interactant>
    <interactant intactId="EBI-747754">
        <id>P28799</id>
        <label>GRN</label>
    </interactant>
    <organismsDiffer>false</organismsDiffer>
    <experiments>3</experiments>
</comment>
<comment type="interaction">
    <interactant intactId="EBI-25862057">
        <id>Q6Q4G3-4</id>
    </interactant>
    <interactant intactId="EBI-720609">
        <id>O76024</id>
        <label>WFS1</label>
    </interactant>
    <organismsDiffer>false</organismsDiffer>
    <experiments>3</experiments>
</comment>
<comment type="subcellular location">
    <subcellularLocation>
        <location evidence="12">Membrane</location>
        <topology evidence="12">Single-pass type II membrane protein</topology>
    </subcellularLocation>
</comment>
<comment type="alternative products">
    <event type="alternative splicing"/>
    <isoform>
        <id>Q6Q4G3-1</id>
        <name>1</name>
        <sequence type="displayed"/>
    </isoform>
    <isoform>
        <id>Q6Q4G3-2</id>
        <name>2</name>
        <sequence type="described" ref="VSP_019919 VSP_019920"/>
    </isoform>
    <isoform>
        <id>Q6Q4G3-3</id>
        <name>3</name>
        <sequence type="described" ref="VSP_019915 VSP_019918 VSP_019921"/>
    </isoform>
    <isoform>
        <id>Q6Q4G3-4</id>
        <name>4</name>
        <sequence type="described" ref="VSP_019915 VSP_019916 VSP_019917"/>
    </isoform>
</comment>
<comment type="tissue specificity">
    <text evidence="6">Specifically expressed in placenta and not in other tissues. Mainly found at the cell surface region of the extravillous trophoblasts. Detected on extravillous trophoblasts in the outer layer of the chorion laeve in the fetal membrane Not detected on either fetal amnionic epithelial cells or maternal decidual cells. Also detected in the migrating extravillous trophoblasts in the maternal decidual tissues (at protein level).</text>
</comment>
<comment type="PTM">
    <text evidence="8">N-glycosylated.</text>
</comment>
<comment type="miscellaneous">
    <molecule>Isoform 3</molecule>
    <text evidence="13">May be produced at very low levels due to a premature stop codon in the mRNA, leading to nonsense-mediated mRNA decay.</text>
</comment>
<comment type="miscellaneous">
    <molecule>Isoform 4</molecule>
    <text evidence="13">May be produced at very low levels due to a premature stop codon in the mRNA, leading to nonsense-mediated mRNA decay.</text>
</comment>
<comment type="similarity">
    <text evidence="13">Belongs to the peptidase M1 family.</text>
</comment>
<comment type="sequence caution" evidence="13">
    <conflict type="erroneous initiation">
        <sequence resource="EMBL-CDS" id="BAC11422"/>
    </conflict>
    <text>Extended N-terminus.</text>
</comment>
<feature type="initiator methionine" description="Removed" evidence="6">
    <location>
        <position position="1"/>
    </location>
</feature>
<feature type="chain" id="PRO_0000247068" description="Aminopeptidase Q">
    <location>
        <begin position="2"/>
        <end position="990"/>
    </location>
</feature>
<feature type="topological domain" description="Cytoplasmic" evidence="12">
    <location>
        <begin position="2"/>
        <end position="13"/>
    </location>
</feature>
<feature type="transmembrane region" description="Helical; Signal-anchor for type II membrane protein" evidence="2">
    <location>
        <begin position="14"/>
        <end position="34"/>
    </location>
</feature>
<feature type="topological domain" description="Lumenal" evidence="12">
    <location>
        <begin position="35"/>
        <end position="990"/>
    </location>
</feature>
<feature type="region of interest" description="Disordered" evidence="4">
    <location>
        <begin position="48"/>
        <end position="91"/>
    </location>
</feature>
<feature type="active site" description="Proton acceptor" evidence="3">
    <location>
        <position position="416"/>
    </location>
</feature>
<feature type="active site" description="Proton donor" evidence="3">
    <location>
        <position position="503"/>
    </location>
</feature>
<feature type="binding site" evidence="1">
    <location>
        <position position="240"/>
    </location>
    <ligand>
        <name>substrate</name>
    </ligand>
</feature>
<feature type="binding site" evidence="1">
    <location>
        <begin position="379"/>
        <end position="383"/>
    </location>
    <ligand>
        <name>substrate</name>
    </ligand>
</feature>
<feature type="binding site" evidence="3">
    <location>
        <position position="415"/>
    </location>
    <ligand>
        <name>Zn(2+)</name>
        <dbReference type="ChEBI" id="CHEBI:29105"/>
        <note>catalytic</note>
    </ligand>
</feature>
<feature type="binding site" evidence="3">
    <location>
        <position position="419"/>
    </location>
    <ligand>
        <name>Zn(2+)</name>
        <dbReference type="ChEBI" id="CHEBI:29105"/>
        <note>catalytic</note>
    </ligand>
</feature>
<feature type="binding site" evidence="3">
    <location>
        <position position="438"/>
    </location>
    <ligand>
        <name>Zn(2+)</name>
        <dbReference type="ChEBI" id="CHEBI:29105"/>
        <note>catalytic</note>
    </ligand>
</feature>
<feature type="site" description="Transition state stabilizer" evidence="1">
    <location>
        <position position="503"/>
    </location>
</feature>
<feature type="glycosylation site" description="N-linked (GlcNAc...) asparagine" evidence="2">
    <location>
        <position position="132"/>
    </location>
</feature>
<feature type="glycosylation site" description="N-linked (GlcNAc...) asparagine" evidence="2">
    <location>
        <position position="168"/>
    </location>
</feature>
<feature type="glycosylation site" description="N-linked (GlcNAc...) asparagine" evidence="2">
    <location>
        <position position="261"/>
    </location>
</feature>
<feature type="glycosylation site" description="N-linked (GlcNAc...) asparagine" evidence="2">
    <location>
        <position position="288"/>
    </location>
</feature>
<feature type="glycosylation site" description="N-linked (GlcNAc...) asparagine" evidence="2">
    <location>
        <position position="319"/>
    </location>
</feature>
<feature type="glycosylation site" description="N-linked (GlcNAc...) asparagine" evidence="2">
    <location>
        <position position="346"/>
    </location>
</feature>
<feature type="glycosylation site" description="N-linked (GlcNAc...) asparagine" evidence="2">
    <location>
        <position position="607"/>
    </location>
</feature>
<feature type="glycosylation site" description="N-linked (GlcNAc...) asparagine" evidence="2">
    <location>
        <position position="653"/>
    </location>
</feature>
<feature type="splice variant" id="VSP_019915" description="In isoform 3 and isoform 4." evidence="11">
    <location>
        <begin position="1"/>
        <end position="483"/>
    </location>
</feature>
<feature type="splice variant" id="VSP_019916" description="In isoform 4." evidence="11">
    <original>AI</original>
    <variation>MR</variation>
    <location>
        <begin position="680"/>
        <end position="681"/>
    </location>
</feature>
<feature type="splice variant" id="VSP_019917" description="In isoform 4." evidence="11">
    <location>
        <begin position="682"/>
        <end position="990"/>
    </location>
</feature>
<feature type="splice variant" id="VSP_019918" description="In isoform 3." evidence="11">
    <original>KNNYIEIETALE</original>
    <variation>NLQDFGHLKVPN</variation>
    <location>
        <begin position="698"/>
        <end position="709"/>
    </location>
</feature>
<feature type="splice variant" id="VSP_019919" description="In isoform 2." evidence="11">
    <original>KNNY</original>
    <variation>KGTY</variation>
    <location>
        <begin position="698"/>
        <end position="701"/>
    </location>
</feature>
<feature type="splice variant" id="VSP_019920" description="In isoform 2." evidence="11">
    <location>
        <begin position="702"/>
        <end position="990"/>
    </location>
</feature>
<feature type="splice variant" id="VSP_019921" description="In isoform 3." evidence="11">
    <location>
        <begin position="710"/>
        <end position="990"/>
    </location>
</feature>
<feature type="sequence variant" id="VAR_027059" description="In dbSNP:rs17138632.">
    <original>V</original>
    <variation>F</variation>
    <location>
        <position position="640"/>
    </location>
</feature>
<feature type="sequence variant" id="VAR_027060" description="In dbSNP:rs10078759." evidence="5 7 9">
    <original>L</original>
    <variation>F</variation>
    <location>
        <position position="689"/>
    </location>
</feature>
<feature type="sequence variant" id="VAR_027061" description="In dbSNP:rs17138681.">
    <original>V</original>
    <variation>I</variation>
    <location>
        <position position="936"/>
    </location>
</feature>
<feature type="sequence conflict" description="In Ref. 1; AAS66719." evidence="13" ref="1">
    <original>R</original>
    <variation>H</variation>
    <location>
        <position position="13"/>
    </location>
</feature>
<feature type="sequence conflict" description="In Ref. 1; AAS66719, 2; BAF84344, 4; EAW48946 and 5; AAH68560/AAI09023/AAI09024." evidence="13" ref="1 2 4 5">
    <original>L</original>
    <variation>S</variation>
    <location>
        <position position="54"/>
    </location>
</feature>
<feature type="sequence conflict" description="In Ref. 1; AAS66719." evidence="13" ref="1">
    <original>P</original>
    <variation>S</variation>
    <location>
        <position position="374"/>
    </location>
</feature>
<protein>
    <recommendedName>
        <fullName evidence="13">Aminopeptidase Q</fullName>
        <shortName evidence="13">AP-Q</shortName>
        <shortName evidence="12">APQ</shortName>
        <ecNumber evidence="8">3.4.11.-</ecNumber>
    </recommendedName>
    <alternativeName>
        <fullName evidence="10">CHL2 antigen</fullName>
    </alternativeName>
    <alternativeName>
        <fullName evidence="10">Laeverin</fullName>
    </alternativeName>
</protein>
<gene>
    <name evidence="14" type="primary">LVRN</name>
    <name evidence="14" type="synonym">AQPEP</name>
</gene>
<accession>Q6Q4G3</accession>
<accession>A8K6J0</accession>
<accession>C9JGD2</accession>
<accession>Q32MR1</accession>
<accession>Q4G0I9</accession>
<accession>Q4G0V2</accession>
<accession>Q86XA3</accession>
<accession>Q8NBZ2</accession>
<proteinExistence type="evidence at protein level"/>
<name>AMPQ_HUMAN</name>
<dbReference type="EC" id="3.4.11.-" evidence="8"/>
<dbReference type="EMBL" id="AY560010">
    <property type="protein sequence ID" value="AAS66719.1"/>
    <property type="molecule type" value="mRNA"/>
</dbReference>
<dbReference type="EMBL" id="AK075131">
    <property type="protein sequence ID" value="BAC11422.1"/>
    <property type="status" value="ALT_INIT"/>
    <property type="molecule type" value="mRNA"/>
</dbReference>
<dbReference type="EMBL" id="AK291655">
    <property type="protein sequence ID" value="BAF84344.1"/>
    <property type="molecule type" value="mRNA"/>
</dbReference>
<dbReference type="EMBL" id="AC010282">
    <property type="status" value="NOT_ANNOTATED_CDS"/>
    <property type="molecule type" value="Genomic_DNA"/>
</dbReference>
<dbReference type="EMBL" id="AC034236">
    <property type="status" value="NOT_ANNOTATED_CDS"/>
    <property type="molecule type" value="Genomic_DNA"/>
</dbReference>
<dbReference type="EMBL" id="CH471086">
    <property type="protein sequence ID" value="EAW48946.1"/>
    <property type="molecule type" value="Genomic_DNA"/>
</dbReference>
<dbReference type="EMBL" id="BC036440">
    <property type="status" value="NOT_ANNOTATED_CDS"/>
    <property type="molecule type" value="mRNA"/>
</dbReference>
<dbReference type="EMBL" id="BC045809">
    <property type="status" value="NOT_ANNOTATED_CDS"/>
    <property type="molecule type" value="mRNA"/>
</dbReference>
<dbReference type="EMBL" id="BC068560">
    <property type="protein sequence ID" value="AAH68560.1"/>
    <property type="molecule type" value="mRNA"/>
</dbReference>
<dbReference type="EMBL" id="BC070028">
    <property type="status" value="NOT_ANNOTATED_CDS"/>
    <property type="molecule type" value="mRNA"/>
</dbReference>
<dbReference type="EMBL" id="BC094716">
    <property type="status" value="NOT_ANNOTATED_CDS"/>
    <property type="molecule type" value="mRNA"/>
</dbReference>
<dbReference type="EMBL" id="BC109022">
    <property type="protein sequence ID" value="AAI09023.1"/>
    <property type="molecule type" value="mRNA"/>
</dbReference>
<dbReference type="EMBL" id="BC109023">
    <property type="protein sequence ID" value="AAI09024.1"/>
    <property type="molecule type" value="mRNA"/>
</dbReference>
<dbReference type="CCDS" id="CCDS4124.1">
    <molecule id="Q6Q4G3-1"/>
</dbReference>
<dbReference type="RefSeq" id="NP_776161.3">
    <molecule id="Q6Q4G3-1"/>
    <property type="nucleotide sequence ID" value="NM_173800.4"/>
</dbReference>
<dbReference type="SMR" id="Q6Q4G3"/>
<dbReference type="BioGRID" id="128502">
    <property type="interactions" value="3"/>
</dbReference>
<dbReference type="FunCoup" id="Q6Q4G3">
    <property type="interactions" value="116"/>
</dbReference>
<dbReference type="IntAct" id="Q6Q4G3">
    <property type="interactions" value="3"/>
</dbReference>
<dbReference type="STRING" id="9606.ENSP00000350541"/>
<dbReference type="ChEMBL" id="CHEMBL3831223"/>
<dbReference type="MEROPS" id="M01.026"/>
<dbReference type="GlyCosmos" id="Q6Q4G3">
    <property type="glycosylation" value="8 sites, No reported glycans"/>
</dbReference>
<dbReference type="GlyGen" id="Q6Q4G3">
    <property type="glycosylation" value="9 sites, 1 N-linked glycan (1 site)"/>
</dbReference>
<dbReference type="iPTMnet" id="Q6Q4G3"/>
<dbReference type="PhosphoSitePlus" id="Q6Q4G3"/>
<dbReference type="BioMuta" id="LVRN"/>
<dbReference type="DMDM" id="296439457"/>
<dbReference type="MassIVE" id="Q6Q4G3"/>
<dbReference type="PaxDb" id="9606-ENSP00000350541"/>
<dbReference type="PeptideAtlas" id="Q6Q4G3"/>
<dbReference type="ProteomicsDB" id="67267">
    <molecule id="Q6Q4G3-1"/>
</dbReference>
<dbReference type="ProteomicsDB" id="67268">
    <molecule id="Q6Q4G3-2"/>
</dbReference>
<dbReference type="ProteomicsDB" id="67269">
    <molecule id="Q6Q4G3-3"/>
</dbReference>
<dbReference type="ProteomicsDB" id="67270">
    <molecule id="Q6Q4G3-4"/>
</dbReference>
<dbReference type="Antibodypedia" id="25460">
    <property type="antibodies" value="18 antibodies from 9 providers"/>
</dbReference>
<dbReference type="DNASU" id="206338"/>
<dbReference type="Ensembl" id="ENST00000357872.9">
    <molecule id="Q6Q4G3-1"/>
    <property type="protein sequence ID" value="ENSP00000350541.4"/>
    <property type="gene ID" value="ENSG00000172901.21"/>
</dbReference>
<dbReference type="Ensembl" id="ENST00000503329.5">
    <molecule id="Q6Q4G3-4"/>
    <property type="protein sequence ID" value="ENSP00000427418.1"/>
    <property type="gene ID" value="ENSG00000172901.21"/>
</dbReference>
<dbReference type="Ensembl" id="ENST00000504467.5">
    <molecule id="Q6Q4G3-2"/>
    <property type="protein sequence ID" value="ENSP00000423604.1"/>
    <property type="gene ID" value="ENSG00000172901.21"/>
</dbReference>
<dbReference type="Ensembl" id="ENST00000512314.5">
    <molecule id="Q6Q4G3-4"/>
    <property type="protein sequence ID" value="ENSP00000427500.1"/>
    <property type="gene ID" value="ENSG00000172901.21"/>
</dbReference>
<dbReference type="Ensembl" id="ENST00000514509.5">
    <molecule id="Q6Q4G3-3"/>
    <property type="protein sequence ID" value="ENSP00000427574.1"/>
    <property type="gene ID" value="ENSG00000172901.21"/>
</dbReference>
<dbReference type="GeneID" id="206338"/>
<dbReference type="KEGG" id="hsa:206338"/>
<dbReference type="MANE-Select" id="ENST00000357872.9">
    <property type="protein sequence ID" value="ENSP00000350541.4"/>
    <property type="RefSeq nucleotide sequence ID" value="NM_173800.5"/>
    <property type="RefSeq protein sequence ID" value="NP_776161.3"/>
</dbReference>
<dbReference type="UCSC" id="uc003kro.4">
    <molecule id="Q6Q4G3-1"/>
    <property type="organism name" value="human"/>
</dbReference>
<dbReference type="AGR" id="HGNC:26904"/>
<dbReference type="CTD" id="206338"/>
<dbReference type="DisGeNET" id="206338"/>
<dbReference type="GeneCards" id="LVRN"/>
<dbReference type="HGNC" id="HGNC:26904">
    <property type="gene designation" value="LVRN"/>
</dbReference>
<dbReference type="HPA" id="ENSG00000172901">
    <property type="expression patterns" value="Group enriched (adipose tissue, placenta)"/>
</dbReference>
<dbReference type="MIM" id="610046">
    <property type="type" value="gene"/>
</dbReference>
<dbReference type="neXtProt" id="NX_Q6Q4G3"/>
<dbReference type="OpenTargets" id="ENSG00000172901"/>
<dbReference type="VEuPathDB" id="HostDB:ENSG00000172901"/>
<dbReference type="eggNOG" id="KOG1046">
    <property type="taxonomic scope" value="Eukaryota"/>
</dbReference>
<dbReference type="GeneTree" id="ENSGT00940000160535"/>
<dbReference type="InParanoid" id="Q6Q4G3"/>
<dbReference type="OMA" id="RHFQMAV"/>
<dbReference type="OrthoDB" id="510539at2759"/>
<dbReference type="PAN-GO" id="Q6Q4G3">
    <property type="GO annotations" value="9 GO annotations based on evolutionary models"/>
</dbReference>
<dbReference type="PhylomeDB" id="Q6Q4G3"/>
<dbReference type="PathwayCommons" id="Q6Q4G3"/>
<dbReference type="SABIO-RK" id="Q6Q4G3"/>
<dbReference type="SignaLink" id="Q6Q4G3"/>
<dbReference type="BioGRID-ORCS" id="206338">
    <property type="hits" value="4 hits in 1110 CRISPR screens"/>
</dbReference>
<dbReference type="ChiTaRS" id="LVRN">
    <property type="organism name" value="human"/>
</dbReference>
<dbReference type="GenomeRNAi" id="206338"/>
<dbReference type="Pharos" id="Q6Q4G3">
    <property type="development level" value="Tbio"/>
</dbReference>
<dbReference type="PRO" id="PR:Q6Q4G3"/>
<dbReference type="Proteomes" id="UP000005640">
    <property type="component" value="Chromosome 5"/>
</dbReference>
<dbReference type="RNAct" id="Q6Q4G3">
    <property type="molecule type" value="protein"/>
</dbReference>
<dbReference type="Bgee" id="ENSG00000172901">
    <property type="expression patterns" value="Expressed in decidua and 116 other cell types or tissues"/>
</dbReference>
<dbReference type="ExpressionAtlas" id="Q6Q4G3">
    <property type="expression patterns" value="baseline and differential"/>
</dbReference>
<dbReference type="GO" id="GO:0005737">
    <property type="term" value="C:cytoplasm"/>
    <property type="evidence" value="ECO:0000318"/>
    <property type="project" value="GO_Central"/>
</dbReference>
<dbReference type="GO" id="GO:0005615">
    <property type="term" value="C:extracellular space"/>
    <property type="evidence" value="ECO:0000318"/>
    <property type="project" value="GO_Central"/>
</dbReference>
<dbReference type="GO" id="GO:0016020">
    <property type="term" value="C:membrane"/>
    <property type="evidence" value="ECO:0000318"/>
    <property type="project" value="GO_Central"/>
</dbReference>
<dbReference type="GO" id="GO:0070006">
    <property type="term" value="F:metalloaminopeptidase activity"/>
    <property type="evidence" value="ECO:0000318"/>
    <property type="project" value="GO_Central"/>
</dbReference>
<dbReference type="GO" id="GO:0042277">
    <property type="term" value="F:peptide binding"/>
    <property type="evidence" value="ECO:0000318"/>
    <property type="project" value="GO_Central"/>
</dbReference>
<dbReference type="GO" id="GO:0008270">
    <property type="term" value="F:zinc ion binding"/>
    <property type="evidence" value="ECO:0000318"/>
    <property type="project" value="GO_Central"/>
</dbReference>
<dbReference type="GO" id="GO:0043171">
    <property type="term" value="P:peptide catabolic process"/>
    <property type="evidence" value="ECO:0000318"/>
    <property type="project" value="GO_Central"/>
</dbReference>
<dbReference type="GO" id="GO:0006508">
    <property type="term" value="P:proteolysis"/>
    <property type="evidence" value="ECO:0000318"/>
    <property type="project" value="GO_Central"/>
</dbReference>
<dbReference type="CDD" id="cd09601">
    <property type="entry name" value="M1_APN-Q_like"/>
    <property type="match status" value="1"/>
</dbReference>
<dbReference type="FunFam" id="1.10.390.10:FF:000015">
    <property type="entry name" value="Aminopeptidase"/>
    <property type="match status" value="1"/>
</dbReference>
<dbReference type="FunFam" id="1.25.50.20:FF:000006">
    <property type="entry name" value="Aminopeptidase"/>
    <property type="match status" value="1"/>
</dbReference>
<dbReference type="FunFam" id="2.60.40.1910:FF:000005">
    <property type="entry name" value="Aminopeptidase"/>
    <property type="match status" value="1"/>
</dbReference>
<dbReference type="FunFam" id="2.60.40.1730:FF:000001">
    <property type="entry name" value="Leucyl-cystinyl aminopeptidase"/>
    <property type="match status" value="1"/>
</dbReference>
<dbReference type="Gene3D" id="1.25.50.20">
    <property type="match status" value="1"/>
</dbReference>
<dbReference type="Gene3D" id="2.60.40.1910">
    <property type="match status" value="1"/>
</dbReference>
<dbReference type="Gene3D" id="1.10.390.10">
    <property type="entry name" value="Neutral Protease Domain 2"/>
    <property type="match status" value="1"/>
</dbReference>
<dbReference type="Gene3D" id="2.60.40.1730">
    <property type="entry name" value="tricorn interacting facor f3 domain"/>
    <property type="match status" value="1"/>
</dbReference>
<dbReference type="InterPro" id="IPR045357">
    <property type="entry name" value="Aminopeptidase_N-like_N"/>
</dbReference>
<dbReference type="InterPro" id="IPR042097">
    <property type="entry name" value="Aminopeptidase_N-like_N_sf"/>
</dbReference>
<dbReference type="InterPro" id="IPR024571">
    <property type="entry name" value="ERAP1-like_C_dom"/>
</dbReference>
<dbReference type="InterPro" id="IPR034016">
    <property type="entry name" value="M1_APN-typ"/>
</dbReference>
<dbReference type="InterPro" id="IPR001930">
    <property type="entry name" value="Peptidase_M1"/>
</dbReference>
<dbReference type="InterPro" id="IPR050344">
    <property type="entry name" value="Peptidase_M1_aminopeptidases"/>
</dbReference>
<dbReference type="InterPro" id="IPR014782">
    <property type="entry name" value="Peptidase_M1_dom"/>
</dbReference>
<dbReference type="InterPro" id="IPR027268">
    <property type="entry name" value="Peptidase_M4/M1_CTD_sf"/>
</dbReference>
<dbReference type="PANTHER" id="PTHR11533:SF31">
    <property type="entry name" value="AMINOPEPTIDASE Q"/>
    <property type="match status" value="1"/>
</dbReference>
<dbReference type="PANTHER" id="PTHR11533">
    <property type="entry name" value="PROTEASE M1 ZINC METALLOPROTEASE"/>
    <property type="match status" value="1"/>
</dbReference>
<dbReference type="Pfam" id="PF11838">
    <property type="entry name" value="ERAP1_C"/>
    <property type="match status" value="1"/>
</dbReference>
<dbReference type="Pfam" id="PF01433">
    <property type="entry name" value="Peptidase_M1"/>
    <property type="match status" value="1"/>
</dbReference>
<dbReference type="Pfam" id="PF17900">
    <property type="entry name" value="Peptidase_M1_N"/>
    <property type="match status" value="1"/>
</dbReference>
<dbReference type="PRINTS" id="PR00756">
    <property type="entry name" value="ALADIPTASE"/>
</dbReference>
<dbReference type="SUPFAM" id="SSF63737">
    <property type="entry name" value="Leukotriene A4 hydrolase N-terminal domain"/>
    <property type="match status" value="1"/>
</dbReference>
<dbReference type="SUPFAM" id="SSF55486">
    <property type="entry name" value="Metalloproteases ('zincins'), catalytic domain"/>
    <property type="match status" value="1"/>
</dbReference>
<dbReference type="PROSITE" id="PS00142">
    <property type="entry name" value="ZINC_PROTEASE"/>
    <property type="match status" value="1"/>
</dbReference>
<evidence type="ECO:0000250" key="1"/>
<evidence type="ECO:0000255" key="2"/>
<evidence type="ECO:0000255" key="3">
    <source>
        <dbReference type="PROSITE-ProRule" id="PRU10095"/>
    </source>
</evidence>
<evidence type="ECO:0000256" key="4">
    <source>
        <dbReference type="SAM" id="MobiDB-lite"/>
    </source>
</evidence>
<evidence type="ECO:0000269" key="5">
    <source>
    </source>
</evidence>
<evidence type="ECO:0000269" key="6">
    <source>
    </source>
</evidence>
<evidence type="ECO:0000269" key="7">
    <source>
    </source>
</evidence>
<evidence type="ECO:0000269" key="8">
    <source>
    </source>
</evidence>
<evidence type="ECO:0000269" key="9">
    <source ref="4"/>
</evidence>
<evidence type="ECO:0000303" key="10">
    <source>
    </source>
</evidence>
<evidence type="ECO:0000303" key="11">
    <source>
    </source>
</evidence>
<evidence type="ECO:0000303" key="12">
    <source>
    </source>
</evidence>
<evidence type="ECO:0000305" key="13"/>
<evidence type="ECO:0000312" key="14">
    <source>
        <dbReference type="HGNC" id="HGNC:26904"/>
    </source>
</evidence>
<sequence length="990" mass="113283">MGPPSSSGFYVSRAVALLLAGLVAALLLALAVLAALYGHCERVPPSELPGLRDLEAESSPPLRQKPTPTPKPSSARELAVTTTPSNWRPPGPWDQLRLPPWLVPLHYDLELWPQLRPDELPAGSLPFTGRVNITVRCTVATSRLLLHSLFQDCERAEVRGPLSPGTGNATVGRVPVDDVWFALDTEYMVLELSEPLKPGSSYELQLSFSGLVKEDLREGLFLNVYTDQGERRALLASQLEPTFARYVFPCFDEPALKATFNITMIHHPSYVALSNMPKLGQSEKEDVNGSKWTVTTFSTTPHMPTYLVAFVICDYDHVNRTERGKEIRIWARKDAIANGSADFALNITGPIFSFLEDLFNISYSLPKTDIIALPSFDNHAMENWGLMIFDESGLLLEPKDQLTEKKTLISYVVSHEIGHQWFGNLVTMNWWNNIWLNEGFASYFEFEVINYFNPKLPRNEIFFSNILHNILREDHALVTRAVAMKVENFKTSEIQELFDIFTYSKGASMARMLSCFLNEHLFVSALKSYLKTFSYSNAEQDDLWRHFQMAIDDQSTVILPATIKNIMDSWTHQSGFPVITLNVSTGVMKQEPFYLENIKNRTLLTSNDTWIVPILWIKNGTTQPLVWLDQSSKVFPEMQVSDSDHDWVILNLNMTGYYRVNYDKLGWKKLNQQLEKDPKAIPVIHRLQLIDDAFSLSKNNYIEIETALELTKYLAEEDEIIVWHTVLVNLVTRDLVSEVNIYDIYSLLKRYLLKRLNLIWNIYSTIIRENVLALQDDYLALISLEKLFVTACWLGLEDCLQLSKELFAKWVDHPENEIPYPIKDVVLCYGIALGSDKEWDILLNTYTNTTNKEEKIQLAYAMSCSKDPWILNRYMEYAISTSPFTSNETNIIEVVASSEVGRYVAKDFLVNNWQAVSKRYGTQSLINLIYTIGRTVTTDLQIVELQQFFSNMLEEHQRIRVHANLQTIKNENLKNKKLSARIAAWLRRNT</sequence>
<reference key="1">
    <citation type="journal article" date="2004" name="Biochem. Biophys. Res. Commun.">
        <title>Human extravillous trophoblasts express laeverin, a novel protein that belongs to membrane-bound gluzincin metallopeptidases.</title>
        <authorList>
            <person name="Fujiwara H."/>
            <person name="Higuchi T."/>
            <person name="Yamada S."/>
            <person name="Hirano T."/>
            <person name="Sato Y."/>
            <person name="Nishioka Y."/>
            <person name="Yoshioka S."/>
            <person name="Tatsumi K."/>
            <person name="Ueda M."/>
            <person name="Maeda M."/>
            <person name="Fujii S."/>
        </authorList>
    </citation>
    <scope>NUCLEOTIDE SEQUENCE [MRNA] (ISOFORM 1)</scope>
    <scope>PROTEIN SEQUENCE OF 2-12; 269-277; 590-599; 811-820 AND 838-847</scope>
    <scope>POSSIBLE FUNCTION</scope>
    <scope>TISSUE SPECIFICITY</scope>
</reference>
<reference key="2">
    <citation type="journal article" date="2004" name="Nat. Genet.">
        <title>Complete sequencing and characterization of 21,243 full-length human cDNAs.</title>
        <authorList>
            <person name="Ota T."/>
            <person name="Suzuki Y."/>
            <person name="Nishikawa T."/>
            <person name="Otsuki T."/>
            <person name="Sugiyama T."/>
            <person name="Irie R."/>
            <person name="Wakamatsu A."/>
            <person name="Hayashi K."/>
            <person name="Sato H."/>
            <person name="Nagai K."/>
            <person name="Kimura K."/>
            <person name="Makita H."/>
            <person name="Sekine M."/>
            <person name="Obayashi M."/>
            <person name="Nishi T."/>
            <person name="Shibahara T."/>
            <person name="Tanaka T."/>
            <person name="Ishii S."/>
            <person name="Yamamoto J."/>
            <person name="Saito K."/>
            <person name="Kawai Y."/>
            <person name="Isono Y."/>
            <person name="Nakamura Y."/>
            <person name="Nagahari K."/>
            <person name="Murakami K."/>
            <person name="Yasuda T."/>
            <person name="Iwayanagi T."/>
            <person name="Wagatsuma M."/>
            <person name="Shiratori A."/>
            <person name="Sudo H."/>
            <person name="Hosoiri T."/>
            <person name="Kaku Y."/>
            <person name="Kodaira H."/>
            <person name="Kondo H."/>
            <person name="Sugawara M."/>
            <person name="Takahashi M."/>
            <person name="Kanda K."/>
            <person name="Yokoi T."/>
            <person name="Furuya T."/>
            <person name="Kikkawa E."/>
            <person name="Omura Y."/>
            <person name="Abe K."/>
            <person name="Kamihara K."/>
            <person name="Katsuta N."/>
            <person name="Sato K."/>
            <person name="Tanikawa M."/>
            <person name="Yamazaki M."/>
            <person name="Ninomiya K."/>
            <person name="Ishibashi T."/>
            <person name="Yamashita H."/>
            <person name="Murakawa K."/>
            <person name="Fujimori K."/>
            <person name="Tanai H."/>
            <person name="Kimata M."/>
            <person name="Watanabe M."/>
            <person name="Hiraoka S."/>
            <person name="Chiba Y."/>
            <person name="Ishida S."/>
            <person name="Ono Y."/>
            <person name="Takiguchi S."/>
            <person name="Watanabe S."/>
            <person name="Yosida M."/>
            <person name="Hotuta T."/>
            <person name="Kusano J."/>
            <person name="Kanehori K."/>
            <person name="Takahashi-Fujii A."/>
            <person name="Hara H."/>
            <person name="Tanase T.-O."/>
            <person name="Nomura Y."/>
            <person name="Togiya S."/>
            <person name="Komai F."/>
            <person name="Hara R."/>
            <person name="Takeuchi K."/>
            <person name="Arita M."/>
            <person name="Imose N."/>
            <person name="Musashino K."/>
            <person name="Yuuki H."/>
            <person name="Oshima A."/>
            <person name="Sasaki N."/>
            <person name="Aotsuka S."/>
            <person name="Yoshikawa Y."/>
            <person name="Matsunawa H."/>
            <person name="Ichihara T."/>
            <person name="Shiohata N."/>
            <person name="Sano S."/>
            <person name="Moriya S."/>
            <person name="Momiyama H."/>
            <person name="Satoh N."/>
            <person name="Takami S."/>
            <person name="Terashima Y."/>
            <person name="Suzuki O."/>
            <person name="Nakagawa S."/>
            <person name="Senoh A."/>
            <person name="Mizoguchi H."/>
            <person name="Goto Y."/>
            <person name="Shimizu F."/>
            <person name="Wakebe H."/>
            <person name="Hishigaki H."/>
            <person name="Watanabe T."/>
            <person name="Sugiyama A."/>
            <person name="Takemoto M."/>
            <person name="Kawakami B."/>
            <person name="Yamazaki M."/>
            <person name="Watanabe K."/>
            <person name="Kumagai A."/>
            <person name="Itakura S."/>
            <person name="Fukuzumi Y."/>
            <person name="Fujimori Y."/>
            <person name="Komiyama M."/>
            <person name="Tashiro H."/>
            <person name="Tanigami A."/>
            <person name="Fujiwara T."/>
            <person name="Ono T."/>
            <person name="Yamada K."/>
            <person name="Fujii Y."/>
            <person name="Ozaki K."/>
            <person name="Hirao M."/>
            <person name="Ohmori Y."/>
            <person name="Kawabata A."/>
            <person name="Hikiji T."/>
            <person name="Kobatake N."/>
            <person name="Inagaki H."/>
            <person name="Ikema Y."/>
            <person name="Okamoto S."/>
            <person name="Okitani R."/>
            <person name="Kawakami T."/>
            <person name="Noguchi S."/>
            <person name="Itoh T."/>
            <person name="Shigeta K."/>
            <person name="Senba T."/>
            <person name="Matsumura K."/>
            <person name="Nakajima Y."/>
            <person name="Mizuno T."/>
            <person name="Morinaga M."/>
            <person name="Sasaki M."/>
            <person name="Togashi T."/>
            <person name="Oyama M."/>
            <person name="Hata H."/>
            <person name="Watanabe M."/>
            <person name="Komatsu T."/>
            <person name="Mizushima-Sugano J."/>
            <person name="Satoh T."/>
            <person name="Shirai Y."/>
            <person name="Takahashi Y."/>
            <person name="Nakagawa K."/>
            <person name="Okumura K."/>
            <person name="Nagase T."/>
            <person name="Nomura N."/>
            <person name="Kikuchi H."/>
            <person name="Masuho Y."/>
            <person name="Yamashita R."/>
            <person name="Nakai K."/>
            <person name="Yada T."/>
            <person name="Nakamura Y."/>
            <person name="Ohara O."/>
            <person name="Isogai T."/>
            <person name="Sugano S."/>
        </authorList>
    </citation>
    <scope>NUCLEOTIDE SEQUENCE [LARGE SCALE MRNA] (ISOFORM 1)</scope>
    <scope>NUCLEOTIDE SEQUENCE [LARGE SCALE MRNA] OF 435-990</scope>
    <scope>VARIANT PHE-689</scope>
    <source>
        <tissue>Placenta</tissue>
    </source>
</reference>
<reference key="3">
    <citation type="journal article" date="2004" name="Nature">
        <title>The DNA sequence and comparative analysis of human chromosome 5.</title>
        <authorList>
            <person name="Schmutz J."/>
            <person name="Martin J."/>
            <person name="Terry A."/>
            <person name="Couronne O."/>
            <person name="Grimwood J."/>
            <person name="Lowry S."/>
            <person name="Gordon L.A."/>
            <person name="Scott D."/>
            <person name="Xie G."/>
            <person name="Huang W."/>
            <person name="Hellsten U."/>
            <person name="Tran-Gyamfi M."/>
            <person name="She X."/>
            <person name="Prabhakar S."/>
            <person name="Aerts A."/>
            <person name="Altherr M."/>
            <person name="Bajorek E."/>
            <person name="Black S."/>
            <person name="Branscomb E."/>
            <person name="Caoile C."/>
            <person name="Challacombe J.F."/>
            <person name="Chan Y.M."/>
            <person name="Denys M."/>
            <person name="Detter J.C."/>
            <person name="Escobar J."/>
            <person name="Flowers D."/>
            <person name="Fotopulos D."/>
            <person name="Glavina T."/>
            <person name="Gomez M."/>
            <person name="Gonzales E."/>
            <person name="Goodstein D."/>
            <person name="Grigoriev I."/>
            <person name="Groza M."/>
            <person name="Hammon N."/>
            <person name="Hawkins T."/>
            <person name="Haydu L."/>
            <person name="Israni S."/>
            <person name="Jett J."/>
            <person name="Kadner K."/>
            <person name="Kimball H."/>
            <person name="Kobayashi A."/>
            <person name="Lopez F."/>
            <person name="Lou Y."/>
            <person name="Martinez D."/>
            <person name="Medina C."/>
            <person name="Morgan J."/>
            <person name="Nandkeshwar R."/>
            <person name="Noonan J.P."/>
            <person name="Pitluck S."/>
            <person name="Pollard M."/>
            <person name="Predki P."/>
            <person name="Priest J."/>
            <person name="Ramirez L."/>
            <person name="Retterer J."/>
            <person name="Rodriguez A."/>
            <person name="Rogers S."/>
            <person name="Salamov A."/>
            <person name="Salazar A."/>
            <person name="Thayer N."/>
            <person name="Tice H."/>
            <person name="Tsai M."/>
            <person name="Ustaszewska A."/>
            <person name="Vo N."/>
            <person name="Wheeler J."/>
            <person name="Wu K."/>
            <person name="Yang J."/>
            <person name="Dickson M."/>
            <person name="Cheng J.-F."/>
            <person name="Eichler E.E."/>
            <person name="Olsen A."/>
            <person name="Pennacchio L.A."/>
            <person name="Rokhsar D.S."/>
            <person name="Richardson P."/>
            <person name="Lucas S.M."/>
            <person name="Myers R.M."/>
            <person name="Rubin E.M."/>
        </authorList>
    </citation>
    <scope>NUCLEOTIDE SEQUENCE [LARGE SCALE GENOMIC DNA]</scope>
</reference>
<reference key="4">
    <citation type="submission" date="2005-09" db="EMBL/GenBank/DDBJ databases">
        <authorList>
            <person name="Mural R.J."/>
            <person name="Istrail S."/>
            <person name="Sutton G.G."/>
            <person name="Florea L."/>
            <person name="Halpern A.L."/>
            <person name="Mobarry C.M."/>
            <person name="Lippert R."/>
            <person name="Walenz B."/>
            <person name="Shatkay H."/>
            <person name="Dew I."/>
            <person name="Miller J.R."/>
            <person name="Flanigan M.J."/>
            <person name="Edwards N.J."/>
            <person name="Bolanos R."/>
            <person name="Fasulo D."/>
            <person name="Halldorsson B.V."/>
            <person name="Hannenhalli S."/>
            <person name="Turner R."/>
            <person name="Yooseph S."/>
            <person name="Lu F."/>
            <person name="Nusskern D.R."/>
            <person name="Shue B.C."/>
            <person name="Zheng X.H."/>
            <person name="Zhong F."/>
            <person name="Delcher A.L."/>
            <person name="Huson D.H."/>
            <person name="Kravitz S.A."/>
            <person name="Mouchard L."/>
            <person name="Reinert K."/>
            <person name="Remington K.A."/>
            <person name="Clark A.G."/>
            <person name="Waterman M.S."/>
            <person name="Eichler E.E."/>
            <person name="Adams M.D."/>
            <person name="Hunkapiller M.W."/>
            <person name="Myers E.W."/>
            <person name="Venter J.C."/>
        </authorList>
    </citation>
    <scope>NUCLEOTIDE SEQUENCE [LARGE SCALE GENOMIC DNA]</scope>
    <scope>VARIANT PHE-689</scope>
</reference>
<reference key="5">
    <citation type="journal article" date="2004" name="Genome Res.">
        <title>The status, quality, and expansion of the NIH full-length cDNA project: the Mammalian Gene Collection (MGC).</title>
        <authorList>
            <consortium name="The MGC Project Team"/>
        </authorList>
    </citation>
    <scope>NUCLEOTIDE SEQUENCE [LARGE SCALE MRNA] (ISOFORMS 1; 2; 3 AND 4)</scope>
    <scope>VARIANT PHE-689</scope>
    <source>
        <tissue>Placenta</tissue>
        <tissue>Testis</tissue>
    </source>
</reference>
<reference key="6">
    <citation type="journal article" date="2007" name="J. Biol. Chem.">
        <title>Laeverin/aminopeptidase Q, a novel bestatin-sensitive leucine aminopeptidase belonging to the M1 family of aminopeptidases.</title>
        <authorList>
            <person name="Maruyama M."/>
            <person name="Hattori A."/>
            <person name="Goto Y."/>
            <person name="Ueda M."/>
            <person name="Maeda M."/>
            <person name="Fujiwara H."/>
            <person name="Tsujimoto M."/>
        </authorList>
    </citation>
    <scope>PROTEIN SEQUENCE OF 65-74</scope>
    <scope>FUNCTION</scope>
    <scope>SUBUNIT</scope>
    <scope>CATALYTIC ACTIVITY</scope>
    <scope>BIOPHYSICOCHEMICAL PROPERTIES</scope>
    <scope>ACTIVITY REGULATION</scope>
    <scope>SUBCELLULAR LOCATION</scope>
    <scope>GLYCOSYLATION</scope>
    <scope>TOPOLOGY</scope>
</reference>
<keyword id="KW-0025">Alternative splicing</keyword>
<keyword id="KW-0903">Direct protein sequencing</keyword>
<keyword id="KW-0325">Glycoprotein</keyword>
<keyword id="KW-0378">Hydrolase</keyword>
<keyword id="KW-0472">Membrane</keyword>
<keyword id="KW-0479">Metal-binding</keyword>
<keyword id="KW-0482">Metalloprotease</keyword>
<keyword id="KW-0645">Protease</keyword>
<keyword id="KW-1267">Proteomics identification</keyword>
<keyword id="KW-1185">Reference proteome</keyword>
<keyword id="KW-0735">Signal-anchor</keyword>
<keyword id="KW-0812">Transmembrane</keyword>
<keyword id="KW-1133">Transmembrane helix</keyword>
<keyword id="KW-0862">Zinc</keyword>
<organism>
    <name type="scientific">Homo sapiens</name>
    <name type="common">Human</name>
    <dbReference type="NCBI Taxonomy" id="9606"/>
    <lineage>
        <taxon>Eukaryota</taxon>
        <taxon>Metazoa</taxon>
        <taxon>Chordata</taxon>
        <taxon>Craniata</taxon>
        <taxon>Vertebrata</taxon>
        <taxon>Euteleostomi</taxon>
        <taxon>Mammalia</taxon>
        <taxon>Eutheria</taxon>
        <taxon>Euarchontoglires</taxon>
        <taxon>Primates</taxon>
        <taxon>Haplorrhini</taxon>
        <taxon>Catarrhini</taxon>
        <taxon>Hominidae</taxon>
        <taxon>Homo</taxon>
    </lineage>
</organism>